<feature type="chain" id="PRO_0000157187" description="Putative septation protein SpoVG">
    <location>
        <begin position="1"/>
        <end position="96"/>
    </location>
</feature>
<reference key="1">
    <citation type="journal article" date="1992" name="Biochim. Biophys. Acta">
        <title>spoVG sequence of Bacillus megaterium and Bacillus subtilis.</title>
        <authorList>
            <person name="Hudspeth D.S.S."/>
            <person name="Vary P.S."/>
        </authorList>
    </citation>
    <scope>NUCLEOTIDE SEQUENCE [GENOMIC DNA]</scope>
    <source>
        <strain>PV361</strain>
    </source>
</reference>
<gene>
    <name evidence="1" type="primary">spoVG</name>
</gene>
<comment type="function">
    <text evidence="1">Essential for sporulation. Interferes with or is a negative regulator of the pathway leading to asymmetric septation.</text>
</comment>
<comment type="developmental stage">
    <text>Specific to stage V sporulation.</text>
</comment>
<comment type="similarity">
    <text evidence="1">Belongs to the SpoVG family.</text>
</comment>
<organism>
    <name type="scientific">Priestia megaterium</name>
    <name type="common">Bacillus megaterium</name>
    <dbReference type="NCBI Taxonomy" id="1404"/>
    <lineage>
        <taxon>Bacteria</taxon>
        <taxon>Bacillati</taxon>
        <taxon>Bacillota</taxon>
        <taxon>Bacilli</taxon>
        <taxon>Bacillales</taxon>
        <taxon>Bacillaceae</taxon>
        <taxon>Priestia</taxon>
    </lineage>
</organism>
<accession>P28016</accession>
<dbReference type="EMBL" id="X62377">
    <property type="protein sequence ID" value="CAA44240.1"/>
    <property type="molecule type" value="Genomic_DNA"/>
</dbReference>
<dbReference type="PIR" id="S18900">
    <property type="entry name" value="S18900"/>
</dbReference>
<dbReference type="SMR" id="P28016"/>
<dbReference type="STRING" id="1348908.GCA_000480335_00660"/>
<dbReference type="eggNOG" id="COG2088">
    <property type="taxonomic scope" value="Bacteria"/>
</dbReference>
<dbReference type="GO" id="GO:0000917">
    <property type="term" value="P:division septum assembly"/>
    <property type="evidence" value="ECO:0007669"/>
    <property type="project" value="UniProtKB-KW"/>
</dbReference>
<dbReference type="GO" id="GO:0030435">
    <property type="term" value="P:sporulation resulting in formation of a cellular spore"/>
    <property type="evidence" value="ECO:0007669"/>
    <property type="project" value="UniProtKB-KW"/>
</dbReference>
<dbReference type="FunFam" id="3.30.1120.40:FF:000001">
    <property type="entry name" value="Putative septation protein SpoVG"/>
    <property type="match status" value="1"/>
</dbReference>
<dbReference type="Gene3D" id="3.30.1120.40">
    <property type="entry name" value="Stage V sporulation protein G"/>
    <property type="match status" value="1"/>
</dbReference>
<dbReference type="HAMAP" id="MF_00819">
    <property type="entry name" value="SpoVG"/>
    <property type="match status" value="1"/>
</dbReference>
<dbReference type="InterPro" id="IPR007170">
    <property type="entry name" value="SpoVG"/>
</dbReference>
<dbReference type="InterPro" id="IPR036751">
    <property type="entry name" value="SpoVG_sf"/>
</dbReference>
<dbReference type="NCBIfam" id="NF009749">
    <property type="entry name" value="PRK13259.1"/>
    <property type="match status" value="1"/>
</dbReference>
<dbReference type="PANTHER" id="PTHR38429">
    <property type="entry name" value="SEPTATION PROTEIN SPOVG-RELATED"/>
    <property type="match status" value="1"/>
</dbReference>
<dbReference type="PANTHER" id="PTHR38429:SF1">
    <property type="entry name" value="SEPTATION PROTEIN SPOVG-RELATED"/>
    <property type="match status" value="1"/>
</dbReference>
<dbReference type="Pfam" id="PF04026">
    <property type="entry name" value="SpoVG"/>
    <property type="match status" value="1"/>
</dbReference>
<dbReference type="SUPFAM" id="SSF160537">
    <property type="entry name" value="SpoVG-like"/>
    <property type="match status" value="1"/>
</dbReference>
<proteinExistence type="evidence at transcript level"/>
<evidence type="ECO:0000255" key="1">
    <source>
        <dbReference type="HAMAP-Rule" id="MF_00819"/>
    </source>
</evidence>
<keyword id="KW-0131">Cell cycle</keyword>
<keyword id="KW-0132">Cell division</keyword>
<keyword id="KW-0717">Septation</keyword>
<keyword id="KW-0749">Sporulation</keyword>
<sequence length="96" mass="10744">MEVTDVRLRRVNTEGRMRAIASITLDGEFVVHDIRVIDGNNGLFVAMPSKRTPDGEFRDIAHPINSNHRGKIQDAVLAEYHRLGEVEVEFEEAGAS</sequence>
<protein>
    <recommendedName>
        <fullName evidence="1">Putative septation protein SpoVG</fullName>
    </recommendedName>
    <alternativeName>
        <fullName evidence="1">Stage V sporulation protein G</fullName>
    </alternativeName>
</protein>
<name>SP5G_PRIMG</name>